<comment type="function">
    <text evidence="1">Pre-mRNA polyadenylation factor that directly interacts with poly(A) polymerase.</text>
</comment>
<comment type="subcellular location">
    <subcellularLocation>
        <location evidence="1">Nucleus</location>
    </subcellularLocation>
</comment>
<comment type="similarity">
    <text evidence="3">Belongs to the FIP1 family.</text>
</comment>
<sequence>MANSDDDDAFLYSDEEQEVEKQGPKVKRVKFADEESNKEEDKTNEKEQQQQKQEASNSESGSGSGSESDSGSESDDDIDIIIRDTQPTKSKSSGTTIIGNEALSEMTDPEESTSSSSTTAAAGTTTINKRQSSSTINLESVPRYQQEEDGEGDGTLITQLDIETLKLKPWRAPGVDVSDYFNYGFDEFTWLAYCHKQDKLRGEFNPQKVMENIMKGPGGAVGANGTNGINLGDKTGQQQQQQQQQQQQQQQQQPPQPPMGMMMPPPGFMANMPMPPMGSMPPMPNMANMPNMANMPNMANMPPPPPGFNGQFPAPYNIPHTMNQKQ</sequence>
<feature type="chain" id="PRO_0000238509" description="Pre-mRNA polyadenylation factor FIP1">
    <location>
        <begin position="1"/>
        <end position="326"/>
    </location>
</feature>
<feature type="region of interest" description="Disordered" evidence="2">
    <location>
        <begin position="1"/>
        <end position="138"/>
    </location>
</feature>
<feature type="region of interest" description="Disordered" evidence="2">
    <location>
        <begin position="215"/>
        <end position="267"/>
    </location>
</feature>
<feature type="region of interest" description="Disordered" evidence="2">
    <location>
        <begin position="302"/>
        <end position="326"/>
    </location>
</feature>
<feature type="compositionally biased region" description="Acidic residues" evidence="2">
    <location>
        <begin position="1"/>
        <end position="18"/>
    </location>
</feature>
<feature type="compositionally biased region" description="Basic and acidic residues" evidence="2">
    <location>
        <begin position="30"/>
        <end position="49"/>
    </location>
</feature>
<feature type="compositionally biased region" description="Low complexity" evidence="2">
    <location>
        <begin position="50"/>
        <end position="69"/>
    </location>
</feature>
<feature type="compositionally biased region" description="Acidic residues" evidence="2">
    <location>
        <begin position="70"/>
        <end position="79"/>
    </location>
</feature>
<feature type="compositionally biased region" description="Polar residues" evidence="2">
    <location>
        <begin position="85"/>
        <end position="98"/>
    </location>
</feature>
<feature type="compositionally biased region" description="Low complexity" evidence="2">
    <location>
        <begin position="112"/>
        <end position="126"/>
    </location>
</feature>
<feature type="compositionally biased region" description="Polar residues" evidence="2">
    <location>
        <begin position="127"/>
        <end position="138"/>
    </location>
</feature>
<feature type="compositionally biased region" description="Low complexity" evidence="2">
    <location>
        <begin position="236"/>
        <end position="253"/>
    </location>
</feature>
<feature type="compositionally biased region" description="Pro residues" evidence="2">
    <location>
        <begin position="254"/>
        <end position="267"/>
    </location>
</feature>
<name>FIP1_CANAL</name>
<evidence type="ECO:0000250" key="1"/>
<evidence type="ECO:0000256" key="2">
    <source>
        <dbReference type="SAM" id="MobiDB-lite"/>
    </source>
</evidence>
<evidence type="ECO:0000305" key="3"/>
<dbReference type="EMBL" id="CP017627">
    <property type="protein sequence ID" value="AOW29673.1"/>
    <property type="molecule type" value="Genomic_DNA"/>
</dbReference>
<dbReference type="RefSeq" id="XP_720566.1">
    <property type="nucleotide sequence ID" value="XM_715473.2"/>
</dbReference>
<dbReference type="SMR" id="Q5AGC1"/>
<dbReference type="STRING" id="237561.Q5AGC1"/>
<dbReference type="EnsemblFungi" id="C5_02480W_A-T">
    <property type="protein sequence ID" value="C5_02480W_A-T-p1"/>
    <property type="gene ID" value="C5_02480W_A"/>
</dbReference>
<dbReference type="GeneID" id="3637762"/>
<dbReference type="KEGG" id="cal:CAALFM_C502480WA"/>
<dbReference type="CGD" id="CAL0000182961">
    <property type="gene designation" value="orf19.11734"/>
</dbReference>
<dbReference type="VEuPathDB" id="FungiDB:C5_02480W_A"/>
<dbReference type="eggNOG" id="KOG1049">
    <property type="taxonomic scope" value="Eukaryota"/>
</dbReference>
<dbReference type="HOGENOM" id="CLU_039307_2_0_1"/>
<dbReference type="InParanoid" id="Q5AGC1"/>
<dbReference type="OrthoDB" id="1917198at2759"/>
<dbReference type="PRO" id="PR:Q5AGC1"/>
<dbReference type="Proteomes" id="UP000000559">
    <property type="component" value="Chromosome 5"/>
</dbReference>
<dbReference type="GO" id="GO:0005847">
    <property type="term" value="C:mRNA cleavage and polyadenylation specificity factor complex"/>
    <property type="evidence" value="ECO:0000318"/>
    <property type="project" value="GO_Central"/>
</dbReference>
<dbReference type="GO" id="GO:0006397">
    <property type="term" value="P:mRNA processing"/>
    <property type="evidence" value="ECO:0007669"/>
    <property type="project" value="UniProtKB-KW"/>
</dbReference>
<dbReference type="GO" id="GO:0009410">
    <property type="term" value="P:response to xenobiotic stimulus"/>
    <property type="evidence" value="ECO:0000315"/>
    <property type="project" value="CGD"/>
</dbReference>
<dbReference type="InterPro" id="IPR007854">
    <property type="entry name" value="Fip1_dom"/>
</dbReference>
<dbReference type="InterPro" id="IPR051187">
    <property type="entry name" value="Pre-mRNA_3'-end_processing_reg"/>
</dbReference>
<dbReference type="PANTHER" id="PTHR13484">
    <property type="entry name" value="FIP1-LIKE 1 PROTEIN"/>
    <property type="match status" value="1"/>
</dbReference>
<dbReference type="PANTHER" id="PTHR13484:SF0">
    <property type="entry name" value="PRE-MRNA 3'-END-PROCESSING FACTOR FIP1"/>
    <property type="match status" value="1"/>
</dbReference>
<dbReference type="Pfam" id="PF05182">
    <property type="entry name" value="Fip1"/>
    <property type="match status" value="1"/>
</dbReference>
<gene>
    <name type="primary">FIP1</name>
    <name type="ordered locus">CAALFM_C502480WA</name>
    <name type="ORF">CaO19.11734</name>
    <name type="ORF">CaO19.4258</name>
</gene>
<accession>Q5AGC1</accession>
<accession>A0A1D8PNI5</accession>
<accession>Q5AGQ7</accession>
<organism>
    <name type="scientific">Candida albicans (strain SC5314 / ATCC MYA-2876)</name>
    <name type="common">Yeast</name>
    <dbReference type="NCBI Taxonomy" id="237561"/>
    <lineage>
        <taxon>Eukaryota</taxon>
        <taxon>Fungi</taxon>
        <taxon>Dikarya</taxon>
        <taxon>Ascomycota</taxon>
        <taxon>Saccharomycotina</taxon>
        <taxon>Pichiomycetes</taxon>
        <taxon>Debaryomycetaceae</taxon>
        <taxon>Candida/Lodderomyces clade</taxon>
        <taxon>Candida</taxon>
    </lineage>
</organism>
<keyword id="KW-0507">mRNA processing</keyword>
<keyword id="KW-0539">Nucleus</keyword>
<keyword id="KW-1185">Reference proteome</keyword>
<protein>
    <recommendedName>
        <fullName>Pre-mRNA polyadenylation factor FIP1</fullName>
    </recommendedName>
</protein>
<reference key="1">
    <citation type="journal article" date="2004" name="Proc. Natl. Acad. Sci. U.S.A.">
        <title>The diploid genome sequence of Candida albicans.</title>
        <authorList>
            <person name="Jones T."/>
            <person name="Federspiel N.A."/>
            <person name="Chibana H."/>
            <person name="Dungan J."/>
            <person name="Kalman S."/>
            <person name="Magee B.B."/>
            <person name="Newport G."/>
            <person name="Thorstenson Y.R."/>
            <person name="Agabian N."/>
            <person name="Magee P.T."/>
            <person name="Davis R.W."/>
            <person name="Scherer S."/>
        </authorList>
    </citation>
    <scope>NUCLEOTIDE SEQUENCE [LARGE SCALE GENOMIC DNA]</scope>
    <source>
        <strain>SC5314 / ATCC MYA-2876</strain>
    </source>
</reference>
<reference key="2">
    <citation type="journal article" date="2007" name="Genome Biol.">
        <title>Assembly of the Candida albicans genome into sixteen supercontigs aligned on the eight chromosomes.</title>
        <authorList>
            <person name="van het Hoog M."/>
            <person name="Rast T.J."/>
            <person name="Martchenko M."/>
            <person name="Grindle S."/>
            <person name="Dignard D."/>
            <person name="Hogues H."/>
            <person name="Cuomo C."/>
            <person name="Berriman M."/>
            <person name="Scherer S."/>
            <person name="Magee B.B."/>
            <person name="Whiteway M."/>
            <person name="Chibana H."/>
            <person name="Nantel A."/>
            <person name="Magee P.T."/>
        </authorList>
    </citation>
    <scope>GENOME REANNOTATION</scope>
    <source>
        <strain>SC5314 / ATCC MYA-2876</strain>
    </source>
</reference>
<reference key="3">
    <citation type="journal article" date="2013" name="Genome Biol.">
        <title>Assembly of a phased diploid Candida albicans genome facilitates allele-specific measurements and provides a simple model for repeat and indel structure.</title>
        <authorList>
            <person name="Muzzey D."/>
            <person name="Schwartz K."/>
            <person name="Weissman J.S."/>
            <person name="Sherlock G."/>
        </authorList>
    </citation>
    <scope>NUCLEOTIDE SEQUENCE [LARGE SCALE GENOMIC DNA]</scope>
    <scope>GENOME REANNOTATION</scope>
    <source>
        <strain>SC5314 / ATCC MYA-2876</strain>
    </source>
</reference>
<proteinExistence type="inferred from homology"/>